<keyword id="KW-0002">3D-structure</keyword>
<keyword id="KW-0204">Cytolysis</keyword>
<keyword id="KW-0354">Hemolysis</keyword>
<keyword id="KW-1032">Host cell membrane</keyword>
<keyword id="KW-1043">Host membrane</keyword>
<keyword id="KW-0446">Lipid-binding</keyword>
<keyword id="KW-0472">Membrane</keyword>
<keyword id="KW-0964">Secreted</keyword>
<keyword id="KW-0732">Signal</keyword>
<keyword id="KW-0800">Toxin</keyword>
<keyword id="KW-0812">Transmembrane</keyword>
<keyword id="KW-1134">Transmembrane beta strand</keyword>
<keyword id="KW-0843">Virulence</keyword>
<protein>
    <recommendedName>
        <fullName>Streptolysin O</fullName>
        <shortName>SLO</shortName>
    </recommendedName>
    <alternativeName>
        <fullName>Thiol-activated cytolysin</fullName>
    </alternativeName>
</protein>
<sequence length="571" mass="63638">MSNKKTFKKYSRVAGLLTAALIIGNLVTANAESNKQNTASTETTTTNEQPKPESSELTTEKAGQKTDDMLNSNDMIKLAPKEMPLESAEKEEKKSEDKKKSEEDHTEEINDKIYSLNYNELEVLAKNGETIENFVPKEGVKKADKFIVIERKKKNINTTPVDISIIDSVTDRTYPAALQLANKGFTENKPDAVVTKRNPQKIHIDLPGMGDKATVEVNDPTYANVSTAIDNLVNQWHDNYSGGNTLPARTQYTESMVYSKSQIEAALNVNSKILDGTLGIDFKSISKGEKKVMIAAYKQIFYTVSANLPNNPADVFDKSVTFKELQRKGVSNEAPPLFVSNVAYGRTVFVKLETSSKSNDVEAAFSAALKGTDVKTNGKYSDILENSSFTAVVLGGDAAEHNKVVTKDFDVIRNVIKDNATFSRKNPAYPISYTSVFLKNNKIAGVNNRTEYVETTSTEYTSGKINLSHQGAYVAQYEILWDEINYDDKGKEVITKRRWDNNWYSKTSPFSTVIPLGANSRNIRIMARECTGLAWEWWRKVIDERDVKLSKEINVNISGSTLSPYGSITYK</sequence>
<name>TACY_STRPQ</name>
<evidence type="ECO:0000250" key="1"/>
<evidence type="ECO:0000250" key="2">
    <source>
        <dbReference type="UniProtKB" id="P0C2J9"/>
    </source>
</evidence>
<evidence type="ECO:0000250" key="3">
    <source>
        <dbReference type="UniProtKB" id="Q04IN8"/>
    </source>
</evidence>
<evidence type="ECO:0000255" key="4"/>
<evidence type="ECO:0000256" key="5">
    <source>
        <dbReference type="SAM" id="MobiDB-lite"/>
    </source>
</evidence>
<evidence type="ECO:0000269" key="6">
    <source>
    </source>
</evidence>
<evidence type="ECO:0000269" key="7">
    <source>
    </source>
</evidence>
<evidence type="ECO:0000305" key="8"/>
<evidence type="ECO:0007744" key="9">
    <source>
        <dbReference type="PDB" id="4HSC"/>
    </source>
</evidence>
<evidence type="ECO:0007829" key="10">
    <source>
        <dbReference type="PDB" id="4HSC"/>
    </source>
</evidence>
<organism>
    <name type="scientific">Streptococcus pyogenes serotype M3 (strain SSI-1)</name>
    <dbReference type="NCBI Taxonomy" id="193567"/>
    <lineage>
        <taxon>Bacteria</taxon>
        <taxon>Bacillati</taxon>
        <taxon>Bacillota</taxon>
        <taxon>Bacilli</taxon>
        <taxon>Lactobacillales</taxon>
        <taxon>Streptococcaceae</taxon>
        <taxon>Streptococcus</taxon>
    </lineage>
</organism>
<accession>P0DF97</accession>
<accession>P0A4L0</accession>
<accession>P21131</accession>
<gene>
    <name type="primary">slo</name>
    <name type="ordered locus">SPs0132</name>
</gene>
<feature type="signal peptide" evidence="4">
    <location>
        <begin position="1"/>
        <end position="33"/>
    </location>
</feature>
<feature type="chain" id="PRO_0000411588" description="Streptolysin O">
    <location>
        <begin position="34"/>
        <end position="571"/>
    </location>
</feature>
<feature type="transmembrane region" description="Beta stranded" evidence="3">
    <location>
        <begin position="260"/>
        <end position="273"/>
    </location>
</feature>
<feature type="transmembrane region" description="Beta stranded" evidence="3">
    <location>
        <begin position="280"/>
        <end position="289"/>
    </location>
</feature>
<feature type="transmembrane region" description="Beta stranded" evidence="3">
    <location>
        <begin position="358"/>
        <end position="367"/>
    </location>
</feature>
<feature type="transmembrane region" description="Beta stranded" evidence="3">
    <location>
        <begin position="375"/>
        <end position="387"/>
    </location>
</feature>
<feature type="region of interest" description="Disordered" evidence="5">
    <location>
        <begin position="30"/>
        <end position="108"/>
    </location>
</feature>
<feature type="short sequence motif" description="Conserved undecapeptide" evidence="8">
    <location>
        <begin position="529"/>
        <end position="539"/>
    </location>
</feature>
<feature type="short sequence motif" description="Cholesterol binding" evidence="6">
    <location>
        <begin position="564"/>
        <end position="565"/>
    </location>
</feature>
<feature type="compositionally biased region" description="Low complexity" evidence="5">
    <location>
        <begin position="37"/>
        <end position="48"/>
    </location>
</feature>
<feature type="compositionally biased region" description="Basic and acidic residues" evidence="5">
    <location>
        <begin position="50"/>
        <end position="68"/>
    </location>
</feature>
<feature type="compositionally biased region" description="Basic and acidic residues" evidence="5">
    <location>
        <begin position="79"/>
        <end position="108"/>
    </location>
</feature>
<feature type="mutagenesis site" description="Loss of hemolytic activity, loss of host membrane binding, loss of cholesterol binding." evidence="6">
    <original>TL</original>
    <variation>GG</variation>
    <location>
        <begin position="561"/>
        <end position="562"/>
    </location>
</feature>
<feature type="helix" evidence="10">
    <location>
        <begin position="106"/>
        <end position="114"/>
    </location>
</feature>
<feature type="helix" evidence="10">
    <location>
        <begin position="122"/>
        <end position="124"/>
    </location>
</feature>
<feature type="strand" evidence="10">
    <location>
        <begin position="136"/>
        <end position="141"/>
    </location>
</feature>
<feature type="strand" evidence="10">
    <location>
        <begin position="143"/>
        <end position="158"/>
    </location>
</feature>
<feature type="strand" evidence="10">
    <location>
        <begin position="161"/>
        <end position="164"/>
    </location>
</feature>
<feature type="strand" evidence="10">
    <location>
        <begin position="167"/>
        <end position="169"/>
    </location>
</feature>
<feature type="strand" evidence="10">
    <location>
        <begin position="178"/>
        <end position="180"/>
    </location>
</feature>
<feature type="helix" evidence="10">
    <location>
        <begin position="183"/>
        <end position="186"/>
    </location>
</feature>
<feature type="strand" evidence="10">
    <location>
        <begin position="200"/>
        <end position="204"/>
    </location>
</feature>
<feature type="strand" evidence="10">
    <location>
        <begin position="214"/>
        <end position="219"/>
    </location>
</feature>
<feature type="helix" evidence="10">
    <location>
        <begin position="222"/>
        <end position="239"/>
    </location>
</feature>
<feature type="strand" evidence="10">
    <location>
        <begin position="249"/>
        <end position="256"/>
    </location>
</feature>
<feature type="helix" evidence="10">
    <location>
        <begin position="260"/>
        <end position="267"/>
    </location>
</feature>
<feature type="helix" evidence="10">
    <location>
        <begin position="271"/>
        <end position="278"/>
    </location>
</feature>
<feature type="helix" evidence="10">
    <location>
        <begin position="282"/>
        <end position="286"/>
    </location>
</feature>
<feature type="strand" evidence="10">
    <location>
        <begin position="291"/>
        <end position="306"/>
    </location>
</feature>
<feature type="helix" evidence="10">
    <location>
        <begin position="312"/>
        <end position="315"/>
    </location>
</feature>
<feature type="helix" evidence="10">
    <location>
        <begin position="322"/>
        <end position="327"/>
    </location>
</feature>
<feature type="strand" evidence="10">
    <location>
        <begin position="336"/>
        <end position="354"/>
    </location>
</feature>
<feature type="helix" evidence="10">
    <location>
        <begin position="361"/>
        <end position="370"/>
    </location>
</feature>
<feature type="helix" evidence="10">
    <location>
        <begin position="372"/>
        <end position="375"/>
    </location>
</feature>
<feature type="helix" evidence="10">
    <location>
        <begin position="378"/>
        <end position="385"/>
    </location>
</feature>
<feature type="strand" evidence="10">
    <location>
        <begin position="387"/>
        <end position="393"/>
    </location>
</feature>
<feature type="helix" evidence="10">
    <location>
        <begin position="398"/>
        <end position="400"/>
    </location>
</feature>
<feature type="strand" evidence="10">
    <location>
        <begin position="402"/>
        <end position="407"/>
    </location>
</feature>
<feature type="helix" evidence="10">
    <location>
        <begin position="409"/>
        <end position="417"/>
    </location>
</feature>
<feature type="strand" evidence="10">
    <location>
        <begin position="420"/>
        <end position="422"/>
    </location>
</feature>
<feature type="strand" evidence="10">
    <location>
        <begin position="429"/>
        <end position="437"/>
    </location>
</feature>
<feature type="turn" evidence="10">
    <location>
        <begin position="438"/>
        <end position="440"/>
    </location>
</feature>
<feature type="strand" evidence="10">
    <location>
        <begin position="448"/>
        <end position="461"/>
    </location>
</feature>
<feature type="strand" evidence="10">
    <location>
        <begin position="463"/>
        <end position="469"/>
    </location>
</feature>
<feature type="strand" evidence="10">
    <location>
        <begin position="472"/>
        <end position="486"/>
    </location>
</feature>
<feature type="strand" evidence="10">
    <location>
        <begin position="488"/>
        <end position="490"/>
    </location>
</feature>
<feature type="strand" evidence="10">
    <location>
        <begin position="492"/>
        <end position="498"/>
    </location>
</feature>
<feature type="turn" evidence="10">
    <location>
        <begin position="500"/>
        <end position="503"/>
    </location>
</feature>
<feature type="strand" evidence="10">
    <location>
        <begin position="506"/>
        <end position="516"/>
    </location>
</feature>
<feature type="strand" evidence="10">
    <location>
        <begin position="520"/>
        <end position="530"/>
    </location>
</feature>
<feature type="strand" evidence="10">
    <location>
        <begin position="537"/>
        <end position="547"/>
    </location>
</feature>
<feature type="strand" evidence="10">
    <location>
        <begin position="551"/>
        <end position="571"/>
    </location>
</feature>
<proteinExistence type="evidence at protein level"/>
<comment type="function">
    <text evidence="6">A cholesterol-dependent toxin that causes cytolysis by forming pores in cholesterol containing host membranes. After binding to target membranes, the protein undergoes a major conformation change, leading to its insertion in the host membrane and formation of an oligomeric pore complex. Cholesterol is required for binding to host membranes, membrane insertion and pore formation; cholesterol binding is mediated by a Thr-Leu pair in the C-terminus. Can be reversibly inactivated by oxidation.</text>
</comment>
<comment type="subunit">
    <text evidence="3">Homooligomeric pore complex of 35 to 50 subunits; when inserted in the host membrane.</text>
</comment>
<comment type="subcellular location">
    <subcellularLocation>
        <location evidence="2">Secreted</location>
    </subcellularLocation>
    <subcellularLocation>
        <location evidence="1">Host cell membrane</location>
        <topology evidence="3">Multi-pass membrane protein</topology>
    </subcellularLocation>
    <text evidence="2 3">Probably secreted as soluble protein by the accessory Sec system (By similarity). It then inserts into the host cell membrane and forms pores formed by transmembrane beta-strands (By similarity).</text>
</comment>
<comment type="domain">
    <text evidence="7">Mature protein (about residues 103 to 571) has 3 discontinuous domains; D1 (residues 103-124, 161-249, 300-345 and 421-444), D2 (residues 125-160 and 445-461), D3 (residues 250-299 and 346-420) followed by C-terminal D4 (residues 462-571).</text>
</comment>
<comment type="similarity">
    <text evidence="8">Belongs to the cholesterol-dependent cytolysin family.</text>
</comment>
<comment type="sequence caution" evidence="8">
    <conflict type="erroneous initiation">
        <sequence resource="EMBL-CDS" id="BAC63227"/>
    </conflict>
    <text>Truncated N-terminus.</text>
</comment>
<reference key="1">
    <citation type="journal article" date="2003" name="Genome Res.">
        <title>Genome sequence of an M3 strain of Streptococcus pyogenes reveals a large-scale genomic rearrangement in invasive strains and new insights into phage evolution.</title>
        <authorList>
            <person name="Nakagawa I."/>
            <person name="Kurokawa K."/>
            <person name="Yamashita A."/>
            <person name="Nakata M."/>
            <person name="Tomiyasu Y."/>
            <person name="Okahashi N."/>
            <person name="Kawabata S."/>
            <person name="Yamazaki K."/>
            <person name="Shiba T."/>
            <person name="Yasunaga T."/>
            <person name="Hayashi H."/>
            <person name="Hattori M."/>
            <person name="Hamada S."/>
        </authorList>
    </citation>
    <scope>NUCLEOTIDE SEQUENCE [LARGE SCALE GENOMIC DNA]</scope>
    <source>
        <strain>SSI-1</strain>
    </source>
</reference>
<reference key="2">
    <citation type="journal article" date="2010" name="Proc. Natl. Acad. Sci. U.S.A.">
        <title>Only two amino acids are essential for cytolytic toxin recognition of cholesterol at the membrane surface.</title>
        <authorList>
            <person name="Farrand A.J."/>
            <person name="LaChapelle S."/>
            <person name="Hotze E.M."/>
            <person name="Johnson A.E."/>
            <person name="Tweten R.K."/>
        </authorList>
    </citation>
    <scope>FUNCTION</scope>
    <scope>CHOLESTEROL-BINDING</scope>
    <scope>MUTAGENESIS OF 561-THR-LEU-562</scope>
</reference>
<reference evidence="9" key="3">
    <citation type="journal article" date="2014" name="J. Mol. Biol.">
        <title>Structural studies of Streptococcus pyogenes streptolysin O provide insights into the early steps of membrane penetration.</title>
        <authorList>
            <person name="Feil S.C."/>
            <person name="Ascher D.B."/>
            <person name="Kuiper M.J."/>
            <person name="Tweten R.K."/>
            <person name="Parker M.W."/>
        </authorList>
    </citation>
    <scope>X-RAY CRYSTALLOGRAPHY (2.10 ANGSTROMS)</scope>
    <scope>DOMAIN</scope>
    <source>
        <strain>SSI-1</strain>
    </source>
</reference>
<dbReference type="EMBL" id="BA000034">
    <property type="protein sequence ID" value="BAC63227.1"/>
    <property type="status" value="ALT_INIT"/>
    <property type="molecule type" value="Genomic_DNA"/>
</dbReference>
<dbReference type="PIR" id="A43507">
    <property type="entry name" value="A43507"/>
</dbReference>
<dbReference type="RefSeq" id="WP_010921831.1">
    <property type="nucleotide sequence ID" value="NC_004606.1"/>
</dbReference>
<dbReference type="PDB" id="4HSC">
    <property type="method" value="X-ray"/>
    <property type="resolution" value="2.10 A"/>
    <property type="chains" value="X=1-571"/>
</dbReference>
<dbReference type="PDBsum" id="4HSC"/>
<dbReference type="SMR" id="P0DF97"/>
<dbReference type="KEGG" id="sps:SPs0132"/>
<dbReference type="HOGENOM" id="CLU_026912_1_0_9"/>
<dbReference type="EvolutionaryTrace" id="P0DF97"/>
<dbReference type="GO" id="GO:0005576">
    <property type="term" value="C:extracellular region"/>
    <property type="evidence" value="ECO:0007669"/>
    <property type="project" value="UniProtKB-SubCell"/>
</dbReference>
<dbReference type="GO" id="GO:0020002">
    <property type="term" value="C:host cell plasma membrane"/>
    <property type="evidence" value="ECO:0007669"/>
    <property type="project" value="UniProtKB-SubCell"/>
</dbReference>
<dbReference type="GO" id="GO:0016020">
    <property type="term" value="C:membrane"/>
    <property type="evidence" value="ECO:0007669"/>
    <property type="project" value="UniProtKB-KW"/>
</dbReference>
<dbReference type="GO" id="GO:0015485">
    <property type="term" value="F:cholesterol binding"/>
    <property type="evidence" value="ECO:0007669"/>
    <property type="project" value="InterPro"/>
</dbReference>
<dbReference type="GO" id="GO:0090729">
    <property type="term" value="F:toxin activity"/>
    <property type="evidence" value="ECO:0007669"/>
    <property type="project" value="UniProtKB-KW"/>
</dbReference>
<dbReference type="GO" id="GO:0031640">
    <property type="term" value="P:killing of cells of another organism"/>
    <property type="evidence" value="ECO:0007669"/>
    <property type="project" value="UniProtKB-KW"/>
</dbReference>
<dbReference type="Gene3D" id="3.30.1040.20">
    <property type="match status" value="1"/>
</dbReference>
<dbReference type="Gene3D" id="3.40.30.40">
    <property type="entry name" value="Perfringolysin"/>
    <property type="match status" value="1"/>
</dbReference>
<dbReference type="Gene3D" id="2.60.40.1430">
    <property type="entry name" value="Perfringolysin, domain 4"/>
    <property type="match status" value="1"/>
</dbReference>
<dbReference type="Gene3D" id="3.90.840.10">
    <property type="entry name" value="Thiol-activated cytolysin superfamily/Thiol-activated cytolysin, alpha-beta domain"/>
    <property type="match status" value="1"/>
</dbReference>
<dbReference type="InterPro" id="IPR035390">
    <property type="entry name" value="Thiol_cytolys_C"/>
</dbReference>
<dbReference type="InterPro" id="IPR038700">
    <property type="entry name" value="Thiol_cytolys_C_sf"/>
</dbReference>
<dbReference type="InterPro" id="IPR001869">
    <property type="entry name" value="Thiol_cytolysin"/>
</dbReference>
<dbReference type="InterPro" id="IPR036363">
    <property type="entry name" value="Thiol_cytolysin_ab_sf"/>
</dbReference>
<dbReference type="InterPro" id="IPR036359">
    <property type="entry name" value="Thiol_cytolysin_sf"/>
</dbReference>
<dbReference type="Pfam" id="PF17440">
    <property type="entry name" value="Thiol_cytolys_C"/>
    <property type="match status" value="1"/>
</dbReference>
<dbReference type="Pfam" id="PF01289">
    <property type="entry name" value="Thiol_cytolysin"/>
    <property type="match status" value="1"/>
</dbReference>
<dbReference type="PRINTS" id="PR01400">
    <property type="entry name" value="TACYTOLYSIN"/>
</dbReference>
<dbReference type="SUPFAM" id="SSF56978">
    <property type="entry name" value="Perfringolysin"/>
    <property type="match status" value="1"/>
</dbReference>
<dbReference type="PROSITE" id="PS00481">
    <property type="entry name" value="THIOL_CYTOLYSINS"/>
    <property type="match status" value="1"/>
</dbReference>